<accession>P82414</accession>
<protein>
    <recommendedName>
        <fullName evidence="3">M-poneritoxin-Ng3a</fullName>
        <shortName evidence="3">M-PONTX-Ng3a</shortName>
    </recommendedName>
    <alternativeName>
        <fullName evidence="4">Poneratoxin</fullName>
    </alternativeName>
    <alternativeName>
        <fullName evidence="2">Ponericin-G1</fullName>
    </alternativeName>
</protein>
<keyword id="KW-0044">Antibiotic</keyword>
<keyword id="KW-0929">Antimicrobial</keyword>
<keyword id="KW-0903">Direct protein sequencing</keyword>
<keyword id="KW-0295">Fungicide</keyword>
<keyword id="KW-0964">Secreted</keyword>
<keyword id="KW-0800">Toxin</keyword>
<sequence length="30" mass="3214">GWKDWAKKAGGWLKKKGPGMAKAALKAAMQ</sequence>
<name>GTX3A_NEOGO</name>
<organism>
    <name type="scientific">Neoponera goeldii</name>
    <name type="common">Ponerine ant</name>
    <name type="synonym">Pachycondyla goeldii</name>
    <dbReference type="NCBI Taxonomy" id="3057131"/>
    <lineage>
        <taxon>Eukaryota</taxon>
        <taxon>Metazoa</taxon>
        <taxon>Ecdysozoa</taxon>
        <taxon>Arthropoda</taxon>
        <taxon>Hexapoda</taxon>
        <taxon>Insecta</taxon>
        <taxon>Pterygota</taxon>
        <taxon>Neoptera</taxon>
        <taxon>Endopterygota</taxon>
        <taxon>Hymenoptera</taxon>
        <taxon>Apocrita</taxon>
        <taxon>Aculeata</taxon>
        <taxon>Formicoidea</taxon>
        <taxon>Formicidae</taxon>
        <taxon>Ponerinae</taxon>
        <taxon>Ponerini</taxon>
        <taxon>Neoponera</taxon>
    </lineage>
</organism>
<feature type="peptide" id="PRO_0000044185" description="M-poneritoxin-Ng3a" evidence="1">
    <location>
        <begin position="1"/>
        <end position="30"/>
    </location>
</feature>
<evidence type="ECO:0000269" key="1">
    <source>
    </source>
</evidence>
<evidence type="ECO:0000303" key="2">
    <source>
    </source>
</evidence>
<evidence type="ECO:0000303" key="3">
    <source>
    </source>
</evidence>
<evidence type="ECO:0000305" key="4"/>
<evidence type="ECO:0000305" key="5">
    <source>
    </source>
</evidence>
<proteinExistence type="evidence at protein level"/>
<comment type="function">
    <text evidence="1">Shows a broad spectrum of activity against both Gram-positive and Gram-negative bacteria. Also has antimicrobial activity against S.cerevisiae. Has insecticidal and non-hemolytic activity.</text>
</comment>
<comment type="subcellular location">
    <subcellularLocation>
        <location evidence="1">Secreted</location>
    </subcellularLocation>
</comment>
<comment type="tissue specificity">
    <text evidence="5">Expressed by the venom gland.</text>
</comment>
<comment type="mass spectrometry" mass="3212.87" method="MALDI" evidence="1"/>
<comment type="similarity">
    <text evidence="4">Belongs to the ponericin-G family.</text>
</comment>
<dbReference type="GO" id="GO:0005576">
    <property type="term" value="C:extracellular region"/>
    <property type="evidence" value="ECO:0007669"/>
    <property type="project" value="UniProtKB-SubCell"/>
</dbReference>
<dbReference type="GO" id="GO:0090729">
    <property type="term" value="F:toxin activity"/>
    <property type="evidence" value="ECO:0007669"/>
    <property type="project" value="UniProtKB-KW"/>
</dbReference>
<dbReference type="GO" id="GO:0042742">
    <property type="term" value="P:defense response to bacterium"/>
    <property type="evidence" value="ECO:0007669"/>
    <property type="project" value="UniProtKB-KW"/>
</dbReference>
<dbReference type="GO" id="GO:0050832">
    <property type="term" value="P:defense response to fungus"/>
    <property type="evidence" value="ECO:0007669"/>
    <property type="project" value="UniProtKB-KW"/>
</dbReference>
<dbReference type="GO" id="GO:0031640">
    <property type="term" value="P:killing of cells of another organism"/>
    <property type="evidence" value="ECO:0007669"/>
    <property type="project" value="UniProtKB-KW"/>
</dbReference>
<dbReference type="InterPro" id="IPR010002">
    <property type="entry name" value="Poneritoxin"/>
</dbReference>
<dbReference type="Pfam" id="PF07442">
    <property type="entry name" value="Ponericin"/>
    <property type="match status" value="1"/>
</dbReference>
<reference key="1">
    <citation type="journal article" date="2001" name="J. Biol. Chem.">
        <title>Ponericins, new antibacterial and insecticidal peptides from the venom of the ant Pachycondyla goeldii.</title>
        <authorList>
            <person name="Orivel J."/>
            <person name="Redeker V."/>
            <person name="Le Caer J.-P."/>
            <person name="Krier F."/>
            <person name="Revol-Junelles A.-M."/>
            <person name="Longeon A."/>
            <person name="Chafotte A."/>
            <person name="Dejean A."/>
            <person name="Rossier J."/>
        </authorList>
    </citation>
    <scope>PROTEIN SEQUENCE</scope>
    <scope>FUNCTION</scope>
    <scope>MASS SPECTROMETRY</scope>
    <scope>SUBCELLULAR LOCATION</scope>
    <source>
        <tissue>Venom</tissue>
    </source>
</reference>
<reference key="2">
    <citation type="journal article" date="2016" name="Toxins">
        <title>The biochemical toxin arsenal from ant venoms.</title>
        <authorList>
            <person name="Touchard A."/>
            <person name="Aili S.R."/>
            <person name="Fox E.G."/>
            <person name="Escoubas P."/>
            <person name="Orivel J."/>
            <person name="Nicholson G.M."/>
            <person name="Dejean A."/>
        </authorList>
    </citation>
    <scope>REVIEW</scope>
    <scope>NOMENCLATURE</scope>
</reference>